<keyword id="KW-0175">Coiled coil</keyword>
<keyword id="KW-0963">Cytoplasm</keyword>
<keyword id="KW-0539">Nucleus</keyword>
<keyword id="KW-1185">Reference proteome</keyword>
<evidence type="ECO:0000250" key="1">
    <source>
        <dbReference type="UniProtKB" id="Q8VDP2"/>
    </source>
</evidence>
<evidence type="ECO:0000250" key="2">
    <source>
        <dbReference type="UniProtKB" id="Q9H5V9"/>
    </source>
</evidence>
<evidence type="ECO:0000255" key="3"/>
<evidence type="ECO:0000256" key="4">
    <source>
        <dbReference type="SAM" id="MobiDB-lite"/>
    </source>
</evidence>
<evidence type="ECO:0000305" key="5"/>
<organism>
    <name type="scientific">Danio rerio</name>
    <name type="common">Zebrafish</name>
    <name type="synonym">Brachydanio rerio</name>
    <dbReference type="NCBI Taxonomy" id="7955"/>
    <lineage>
        <taxon>Eukaryota</taxon>
        <taxon>Metazoa</taxon>
        <taxon>Chordata</taxon>
        <taxon>Craniata</taxon>
        <taxon>Vertebrata</taxon>
        <taxon>Euteleostomi</taxon>
        <taxon>Actinopterygii</taxon>
        <taxon>Neopterygii</taxon>
        <taxon>Teleostei</taxon>
        <taxon>Ostariophysi</taxon>
        <taxon>Cypriniformes</taxon>
        <taxon>Danionidae</taxon>
        <taxon>Danioninae</taxon>
        <taxon>Danio</taxon>
    </lineage>
</organism>
<reference key="1">
    <citation type="submission" date="2004-09" db="EMBL/GenBank/DDBJ databases">
        <authorList>
            <consortium name="NIH - Zebrafish Gene Collection (ZGC) project"/>
        </authorList>
    </citation>
    <scope>NUCLEOTIDE SEQUENCE [LARGE SCALE MRNA]</scope>
    <source>
        <tissue>Liver</tissue>
    </source>
</reference>
<protein>
    <recommendedName>
        <fullName evidence="2">STING ER exit protein</fullName>
        <shortName evidence="2">STEEP</shortName>
    </recommendedName>
</protein>
<gene>
    <name evidence="2" type="primary">steep1</name>
</gene>
<gene>
    <name type="ORF">zgc:103697</name>
</gene>
<sequence length="224" mass="25789">MPKVVSRSVVCSDTRDREEYDDGEKPLHVYYCLCGQMVLVLDCQIEKLPMRPRDKARVIDAAKHAHKFCNVEEDEAVYLKRSEGIERQYRKKCGKCGLLLFYQHQMKSTQTTFIVDGALVKFGQGFGNTSVYSQKQETPKKVRVMMTKRTKDMGKFSSVTVSTIDEEEEEIEAREVADSYAQNAKVIEKQLERKGMSKRRLQEPAELEAKKAKMKGTLIDNQFK</sequence>
<dbReference type="EMBL" id="BC081515">
    <property type="protein sequence ID" value="AAH81515.1"/>
    <property type="molecule type" value="mRNA"/>
</dbReference>
<dbReference type="RefSeq" id="NP_001004659.1">
    <property type="nucleotide sequence ID" value="NM_001004659.1"/>
</dbReference>
<dbReference type="SMR" id="Q66I61"/>
<dbReference type="FunCoup" id="Q66I61">
    <property type="interactions" value="2017"/>
</dbReference>
<dbReference type="STRING" id="7955.ENSDARP00000069117"/>
<dbReference type="PaxDb" id="7955-ENSDARP00000069117"/>
<dbReference type="GeneID" id="447921"/>
<dbReference type="KEGG" id="dre:447921"/>
<dbReference type="AGR" id="ZFIN:ZDB-GENE-040912-104"/>
<dbReference type="CTD" id="63932"/>
<dbReference type="ZFIN" id="ZDB-GENE-040912-104">
    <property type="gene designation" value="steep1"/>
</dbReference>
<dbReference type="eggNOG" id="KOG4397">
    <property type="taxonomic scope" value="Eukaryota"/>
</dbReference>
<dbReference type="InParanoid" id="Q66I61"/>
<dbReference type="OrthoDB" id="418131at2759"/>
<dbReference type="PhylomeDB" id="Q66I61"/>
<dbReference type="Reactome" id="R-DRE-72163">
    <property type="pathway name" value="mRNA Splicing - Major Pathway"/>
</dbReference>
<dbReference type="PRO" id="PR:Q66I61"/>
<dbReference type="Proteomes" id="UP000000437">
    <property type="component" value="Chromosome 5"/>
</dbReference>
<dbReference type="GO" id="GO:0044297">
    <property type="term" value="C:cell body"/>
    <property type="evidence" value="ECO:0000250"/>
    <property type="project" value="UniProtKB"/>
</dbReference>
<dbReference type="GO" id="GO:0005737">
    <property type="term" value="C:cytoplasm"/>
    <property type="evidence" value="ECO:0000250"/>
    <property type="project" value="UniProtKB"/>
</dbReference>
<dbReference type="GO" id="GO:0005634">
    <property type="term" value="C:nucleus"/>
    <property type="evidence" value="ECO:0000250"/>
    <property type="project" value="UniProtKB"/>
</dbReference>
<dbReference type="GO" id="GO:0030674">
    <property type="term" value="F:protein-macromolecule adaptor activity"/>
    <property type="evidence" value="ECO:0000250"/>
    <property type="project" value="UniProtKB"/>
</dbReference>
<dbReference type="GO" id="GO:0090158">
    <property type="term" value="P:endoplasmic reticulum membrane organization"/>
    <property type="evidence" value="ECO:0000250"/>
    <property type="project" value="UniProtKB"/>
</dbReference>
<dbReference type="GO" id="GO:0006888">
    <property type="term" value="P:endoplasmic reticulum to Golgi vesicle-mediated transport"/>
    <property type="evidence" value="ECO:0000250"/>
    <property type="project" value="UniProtKB"/>
</dbReference>
<dbReference type="GO" id="GO:0032527">
    <property type="term" value="P:protein exit from endoplasmic reticulum"/>
    <property type="evidence" value="ECO:0000250"/>
    <property type="project" value="UniProtKB"/>
</dbReference>
<dbReference type="InterPro" id="IPR029704">
    <property type="entry name" value="STEEP-like"/>
</dbReference>
<dbReference type="PANTHER" id="PTHR46355:SF1">
    <property type="entry name" value="STING ER EXIT PROTEIN"/>
    <property type="match status" value="1"/>
</dbReference>
<dbReference type="PANTHER" id="PTHR46355">
    <property type="entry name" value="UPF0428 PROTEIN CXORF56"/>
    <property type="match status" value="1"/>
</dbReference>
<feature type="chain" id="PRO_0000287612" description="STING ER exit protein">
    <location>
        <begin position="1"/>
        <end position="224"/>
    </location>
</feature>
<feature type="region of interest" description="Disordered" evidence="4">
    <location>
        <begin position="191"/>
        <end position="224"/>
    </location>
</feature>
<feature type="coiled-coil region" evidence="3">
    <location>
        <begin position="172"/>
        <end position="194"/>
    </location>
</feature>
<feature type="compositionally biased region" description="Basic and acidic residues" evidence="4">
    <location>
        <begin position="191"/>
        <end position="211"/>
    </location>
</feature>
<comment type="function">
    <text evidence="2">Molecular adapter that stimulates membrane curvature formation and subsequent endoplasmic reticulum exit site (ERES) establishment by recruiting PI3K complex I, leading to COPII vesicle-mediated transport (By similarity). Promotes endoplasmic reticulum (ER) exit of cGAMP-activated STING1 oligomers (By similarity).</text>
</comment>
<comment type="subcellular location">
    <subcellularLocation>
        <location evidence="1">Cytoplasm</location>
    </subcellularLocation>
    <subcellularLocation>
        <location evidence="2">Nucleus</location>
    </subcellularLocation>
</comment>
<comment type="similarity">
    <text evidence="5">Belongs to the STEEP1 family.</text>
</comment>
<accession>Q66I61</accession>
<proteinExistence type="evidence at transcript level"/>
<name>STEEP_DANRE</name>